<reference evidence="4" key="1">
    <citation type="thesis" date="2004" institute="The Hong Kong Polytechnic University" country="Hong Kong">
        <title>Proteomic approach to characterize differential protein expression in toxic and harmful algal bloom species (HABs).</title>
        <authorList>
            <person name="Chan L.L."/>
        </authorList>
    </citation>
    <scope>PROTEIN SEQUENCE</scope>
    <scope>DEVELOPMENTAL STAGE</scope>
    <source>
        <strain evidence="4">Hong Kong</strain>
    </source>
</reference>
<reference key="2">
    <citation type="journal article" date="2004" name="Proteomics">
        <title>Proteomic study of a model causative agent of harmful algal blooms, Prorocentrum triestinum II: the use of differentially expressed protein profiles under different growth phases and growth conditions for bloom prediction.</title>
        <authorList>
            <person name="Chan L.L."/>
            <person name="Hodgkiss I.J."/>
            <person name="Wan J.M.-F."/>
            <person name="Lum J.H.-K."/>
            <person name="Mak A.S.-C."/>
            <person name="Sit W.-H."/>
            <person name="Lo S.C.-L."/>
        </authorList>
    </citation>
    <scope>PROTEIN SEQUENCE</scope>
    <scope>DEVELOPMENTAL STAGE</scope>
    <source>
        <strain>Hong Kong</strain>
    </source>
</reference>
<protein>
    <recommendedName>
        <fullName>Blooming-related protein 2</fullName>
        <shortName>BP2</shortName>
    </recommendedName>
</protein>
<sequence length="20" mass="2314">VSAEYLERQGPKDDXDCFDD</sequence>
<proteinExistence type="evidence at protein level"/>
<organism evidence="4">
    <name type="scientific">Prorocentrum triestinum</name>
    <name type="common">Red tide alga</name>
    <dbReference type="NCBI Taxonomy" id="39450"/>
    <lineage>
        <taxon>Eukaryota</taxon>
        <taxon>Sar</taxon>
        <taxon>Alveolata</taxon>
        <taxon>Dinophyceae</taxon>
        <taxon>Prorocentrales</taxon>
        <taxon>Prorocentraceae</taxon>
        <taxon>Prorocentrum</taxon>
    </lineage>
</organism>
<feature type="chain" id="PRO_0000064971" description="Blooming-related protein 2">
    <location>
        <begin position="1"/>
        <end position="20" status="greater than"/>
    </location>
</feature>
<feature type="region of interest" description="Disordered" evidence="1">
    <location>
        <begin position="1"/>
        <end position="20"/>
    </location>
</feature>
<feature type="non-terminal residue" evidence="4">
    <location>
        <position position="20"/>
    </location>
</feature>
<keyword id="KW-0131">Cell cycle</keyword>
<keyword id="KW-0132">Cell division</keyword>
<keyword id="KW-0903">Direct protein sequencing</keyword>
<name>BP2_PROTR</name>
<evidence type="ECO:0000256" key="1">
    <source>
        <dbReference type="SAM" id="MobiDB-lite"/>
    </source>
</evidence>
<evidence type="ECO:0000269" key="2">
    <source>
    </source>
</evidence>
<evidence type="ECO:0000269" key="3">
    <source ref="1"/>
</evidence>
<evidence type="ECO:0000305" key="4"/>
<comment type="function">
    <text evidence="4">Possible 'checkpoint' protein for cell division in the blooming process.</text>
</comment>
<comment type="developmental stage">
    <text evidence="2 3 4">Only present in the blooming stage (S and G2/M) of the algal life cycle.</text>
</comment>
<comment type="miscellaneous">
    <text evidence="4">On the 2D-gel the determined pI of this protein is: 4.8, its MW is: 21.5 kDa.</text>
</comment>
<dbReference type="GO" id="GO:0051301">
    <property type="term" value="P:cell division"/>
    <property type="evidence" value="ECO:0007669"/>
    <property type="project" value="UniProtKB-KW"/>
</dbReference>
<accession>P83767</accession>